<gene>
    <name evidence="1" type="primary">dapB</name>
    <name type="ordered locus">SSP1354</name>
</gene>
<name>DAPB_STAS1</name>
<organism>
    <name type="scientific">Staphylococcus saprophyticus subsp. saprophyticus (strain ATCC 15305 / DSM 20229 / NCIMB 8711 / NCTC 7292 / S-41)</name>
    <dbReference type="NCBI Taxonomy" id="342451"/>
    <lineage>
        <taxon>Bacteria</taxon>
        <taxon>Bacillati</taxon>
        <taxon>Bacillota</taxon>
        <taxon>Bacilli</taxon>
        <taxon>Bacillales</taxon>
        <taxon>Staphylococcaceae</taxon>
        <taxon>Staphylococcus</taxon>
    </lineage>
</organism>
<feature type="chain" id="PRO_0000228392" description="4-hydroxy-tetrahydrodipicolinate reductase">
    <location>
        <begin position="1"/>
        <end position="240"/>
    </location>
</feature>
<feature type="active site" description="Proton donor/acceptor" evidence="1">
    <location>
        <position position="135"/>
    </location>
</feature>
<feature type="active site" description="Proton donor" evidence="1">
    <location>
        <position position="139"/>
    </location>
</feature>
<feature type="binding site" evidence="1">
    <location>
        <begin position="79"/>
        <end position="81"/>
    </location>
    <ligand>
        <name>NAD(+)</name>
        <dbReference type="ChEBI" id="CHEBI:57540"/>
    </ligand>
</feature>
<feature type="binding site" evidence="1">
    <location>
        <begin position="103"/>
        <end position="106"/>
    </location>
    <ligand>
        <name>NAD(+)</name>
        <dbReference type="ChEBI" id="CHEBI:57540"/>
    </ligand>
</feature>
<feature type="binding site" evidence="1">
    <location>
        <position position="136"/>
    </location>
    <ligand>
        <name>(S)-2,3,4,5-tetrahydrodipicolinate</name>
        <dbReference type="ChEBI" id="CHEBI:16845"/>
    </ligand>
</feature>
<feature type="binding site" evidence="1">
    <location>
        <begin position="145"/>
        <end position="146"/>
    </location>
    <ligand>
        <name>(S)-2,3,4,5-tetrahydrodipicolinate</name>
        <dbReference type="ChEBI" id="CHEBI:16845"/>
    </ligand>
</feature>
<reference key="1">
    <citation type="journal article" date="2005" name="Proc. Natl. Acad. Sci. U.S.A.">
        <title>Whole genome sequence of Staphylococcus saprophyticus reveals the pathogenesis of uncomplicated urinary tract infection.</title>
        <authorList>
            <person name="Kuroda M."/>
            <person name="Yamashita A."/>
            <person name="Hirakawa H."/>
            <person name="Kumano M."/>
            <person name="Morikawa K."/>
            <person name="Higashide M."/>
            <person name="Maruyama A."/>
            <person name="Inose Y."/>
            <person name="Matoba K."/>
            <person name="Toh H."/>
            <person name="Kuhara S."/>
            <person name="Hattori M."/>
            <person name="Ohta T."/>
        </authorList>
    </citation>
    <scope>NUCLEOTIDE SEQUENCE [LARGE SCALE GENOMIC DNA]</scope>
    <source>
        <strain>ATCC 15305 / DSM 20229 / NCIMB 8711 / NCTC 7292 / S-41</strain>
    </source>
</reference>
<protein>
    <recommendedName>
        <fullName evidence="1">4-hydroxy-tetrahydrodipicolinate reductase</fullName>
        <shortName evidence="1">HTPA reductase</shortName>
        <ecNumber evidence="1">1.17.1.8</ecNumber>
    </recommendedName>
</protein>
<dbReference type="EC" id="1.17.1.8" evidence="1"/>
<dbReference type="EMBL" id="AP008934">
    <property type="protein sequence ID" value="BAE18499.1"/>
    <property type="molecule type" value="Genomic_DNA"/>
</dbReference>
<dbReference type="RefSeq" id="WP_011303133.1">
    <property type="nucleotide sequence ID" value="NZ_MTGA01000038.1"/>
</dbReference>
<dbReference type="SMR" id="Q49XJ8"/>
<dbReference type="GeneID" id="3616692"/>
<dbReference type="KEGG" id="ssp:SSP1354"/>
<dbReference type="PATRIC" id="fig|342451.11.peg.1358"/>
<dbReference type="eggNOG" id="COG0289">
    <property type="taxonomic scope" value="Bacteria"/>
</dbReference>
<dbReference type="HOGENOM" id="CLU_047479_2_2_9"/>
<dbReference type="OrthoDB" id="9790352at2"/>
<dbReference type="UniPathway" id="UPA00034">
    <property type="reaction ID" value="UER00018"/>
</dbReference>
<dbReference type="Proteomes" id="UP000006371">
    <property type="component" value="Chromosome"/>
</dbReference>
<dbReference type="GO" id="GO:0005829">
    <property type="term" value="C:cytosol"/>
    <property type="evidence" value="ECO:0007669"/>
    <property type="project" value="TreeGrafter"/>
</dbReference>
<dbReference type="GO" id="GO:0008839">
    <property type="term" value="F:4-hydroxy-tetrahydrodipicolinate reductase"/>
    <property type="evidence" value="ECO:0007669"/>
    <property type="project" value="UniProtKB-EC"/>
</dbReference>
<dbReference type="GO" id="GO:0051287">
    <property type="term" value="F:NAD binding"/>
    <property type="evidence" value="ECO:0007669"/>
    <property type="project" value="UniProtKB-UniRule"/>
</dbReference>
<dbReference type="GO" id="GO:0050661">
    <property type="term" value="F:NADP binding"/>
    <property type="evidence" value="ECO:0007669"/>
    <property type="project" value="UniProtKB-UniRule"/>
</dbReference>
<dbReference type="GO" id="GO:0016726">
    <property type="term" value="F:oxidoreductase activity, acting on CH or CH2 groups, NAD or NADP as acceptor"/>
    <property type="evidence" value="ECO:0007669"/>
    <property type="project" value="UniProtKB-UniRule"/>
</dbReference>
<dbReference type="GO" id="GO:0019877">
    <property type="term" value="P:diaminopimelate biosynthetic process"/>
    <property type="evidence" value="ECO:0007669"/>
    <property type="project" value="UniProtKB-UniRule"/>
</dbReference>
<dbReference type="GO" id="GO:0009089">
    <property type="term" value="P:lysine biosynthetic process via diaminopimelate"/>
    <property type="evidence" value="ECO:0007669"/>
    <property type="project" value="UniProtKB-UniRule"/>
</dbReference>
<dbReference type="FunFam" id="3.30.360.10:FF:000009">
    <property type="entry name" value="4-hydroxy-tetrahydrodipicolinate reductase"/>
    <property type="match status" value="1"/>
</dbReference>
<dbReference type="Gene3D" id="3.30.360.10">
    <property type="entry name" value="Dihydrodipicolinate Reductase, domain 2"/>
    <property type="match status" value="1"/>
</dbReference>
<dbReference type="Gene3D" id="3.40.50.720">
    <property type="entry name" value="NAD(P)-binding Rossmann-like Domain"/>
    <property type="match status" value="1"/>
</dbReference>
<dbReference type="HAMAP" id="MF_00102">
    <property type="entry name" value="DapB"/>
    <property type="match status" value="1"/>
</dbReference>
<dbReference type="InterPro" id="IPR022663">
    <property type="entry name" value="DapB_C"/>
</dbReference>
<dbReference type="InterPro" id="IPR000846">
    <property type="entry name" value="DapB_N"/>
</dbReference>
<dbReference type="InterPro" id="IPR022664">
    <property type="entry name" value="DapB_N_CS"/>
</dbReference>
<dbReference type="InterPro" id="IPR023940">
    <property type="entry name" value="DHDPR_bac"/>
</dbReference>
<dbReference type="InterPro" id="IPR036291">
    <property type="entry name" value="NAD(P)-bd_dom_sf"/>
</dbReference>
<dbReference type="NCBIfam" id="TIGR00036">
    <property type="entry name" value="dapB"/>
    <property type="match status" value="1"/>
</dbReference>
<dbReference type="PANTHER" id="PTHR20836:SF7">
    <property type="entry name" value="4-HYDROXY-TETRAHYDRODIPICOLINATE REDUCTASE"/>
    <property type="match status" value="1"/>
</dbReference>
<dbReference type="PANTHER" id="PTHR20836">
    <property type="entry name" value="DIHYDRODIPICOLINATE REDUCTASE"/>
    <property type="match status" value="1"/>
</dbReference>
<dbReference type="Pfam" id="PF05173">
    <property type="entry name" value="DapB_C"/>
    <property type="match status" value="1"/>
</dbReference>
<dbReference type="Pfam" id="PF01113">
    <property type="entry name" value="DapB_N"/>
    <property type="match status" value="1"/>
</dbReference>
<dbReference type="PIRSF" id="PIRSF000161">
    <property type="entry name" value="DHPR"/>
    <property type="match status" value="1"/>
</dbReference>
<dbReference type="SUPFAM" id="SSF55347">
    <property type="entry name" value="Glyceraldehyde-3-phosphate dehydrogenase-like, C-terminal domain"/>
    <property type="match status" value="1"/>
</dbReference>
<dbReference type="SUPFAM" id="SSF51735">
    <property type="entry name" value="NAD(P)-binding Rossmann-fold domains"/>
    <property type="match status" value="1"/>
</dbReference>
<dbReference type="PROSITE" id="PS01298">
    <property type="entry name" value="DAPB"/>
    <property type="match status" value="1"/>
</dbReference>
<comment type="function">
    <text evidence="1">Catalyzes the conversion of 4-hydroxy-tetrahydrodipicolinate (HTPA) to tetrahydrodipicolinate.</text>
</comment>
<comment type="catalytic activity">
    <reaction evidence="1">
        <text>(S)-2,3,4,5-tetrahydrodipicolinate + NAD(+) + H2O = (2S,4S)-4-hydroxy-2,3,4,5-tetrahydrodipicolinate + NADH + H(+)</text>
        <dbReference type="Rhea" id="RHEA:35323"/>
        <dbReference type="ChEBI" id="CHEBI:15377"/>
        <dbReference type="ChEBI" id="CHEBI:15378"/>
        <dbReference type="ChEBI" id="CHEBI:16845"/>
        <dbReference type="ChEBI" id="CHEBI:57540"/>
        <dbReference type="ChEBI" id="CHEBI:57945"/>
        <dbReference type="ChEBI" id="CHEBI:67139"/>
        <dbReference type="EC" id="1.17.1.8"/>
    </reaction>
</comment>
<comment type="catalytic activity">
    <reaction evidence="1">
        <text>(S)-2,3,4,5-tetrahydrodipicolinate + NADP(+) + H2O = (2S,4S)-4-hydroxy-2,3,4,5-tetrahydrodipicolinate + NADPH + H(+)</text>
        <dbReference type="Rhea" id="RHEA:35331"/>
        <dbReference type="ChEBI" id="CHEBI:15377"/>
        <dbReference type="ChEBI" id="CHEBI:15378"/>
        <dbReference type="ChEBI" id="CHEBI:16845"/>
        <dbReference type="ChEBI" id="CHEBI:57783"/>
        <dbReference type="ChEBI" id="CHEBI:58349"/>
        <dbReference type="ChEBI" id="CHEBI:67139"/>
        <dbReference type="EC" id="1.17.1.8"/>
    </reaction>
</comment>
<comment type="pathway">
    <text evidence="1">Amino-acid biosynthesis; L-lysine biosynthesis via DAP pathway; (S)-tetrahydrodipicolinate from L-aspartate: step 4/4.</text>
</comment>
<comment type="subcellular location">
    <subcellularLocation>
        <location evidence="1">Cytoplasm</location>
    </subcellularLocation>
</comment>
<comment type="similarity">
    <text evidence="1">Belongs to the DapB family.</text>
</comment>
<comment type="caution">
    <text evidence="2">Was originally thought to be a dihydrodipicolinate reductase (DHDPR), catalyzing the conversion of dihydrodipicolinate to tetrahydrodipicolinate. However, it was shown in E.coli that the substrate of the enzymatic reaction is not dihydrodipicolinate (DHDP) but in fact (2S,4S)-4-hydroxy-2,3,4,5-tetrahydrodipicolinic acid (HTPA), the product released by the DapA-catalyzed reaction.</text>
</comment>
<sequence>MKILLIGYGAMNQRVARLAEEKNHEIVGVIVRNSEKHYPYPTFEHISEATEADVAIDFSNPELLLPLLEEDFNLPVVIATTGEKEQIIDKLKALSTDMPVFFSANMSYGVHALTKILEAAVPLLQDFDIELTEAHHNKKVDAPSGTLVKLYDVIESLRETTTPVYDRHETTEKRTQDEIGIHSIRGGTIVGEHDVLFAGTDETIEITHRAQSKDIFANGAISAAEKLVQNKNGYYTFDNL</sequence>
<keyword id="KW-0028">Amino-acid biosynthesis</keyword>
<keyword id="KW-0963">Cytoplasm</keyword>
<keyword id="KW-0220">Diaminopimelate biosynthesis</keyword>
<keyword id="KW-0457">Lysine biosynthesis</keyword>
<keyword id="KW-0520">NAD</keyword>
<keyword id="KW-0521">NADP</keyword>
<keyword id="KW-0560">Oxidoreductase</keyword>
<keyword id="KW-1185">Reference proteome</keyword>
<proteinExistence type="inferred from homology"/>
<evidence type="ECO:0000255" key="1">
    <source>
        <dbReference type="HAMAP-Rule" id="MF_00102"/>
    </source>
</evidence>
<evidence type="ECO:0000305" key="2"/>
<accession>Q49XJ8</accession>